<sequence>MENEKNYRPNVAAIVLSSSYPFECKIFIAKRSDMDNIWQFPQGGIDKGESVKNALFRELKEEIGTDEVEIIAEYPEWLSYDFPSKIVKKMYPYDGQIQKYFLVRLKHGATININTKHPEFDDYQFVSVKQIFEMINHFKKNIYVKVIKYFEEKGYI</sequence>
<dbReference type="EC" id="3.6.1.-" evidence="1"/>
<dbReference type="EMBL" id="CP000814">
    <property type="protein sequence ID" value="ABV52142.1"/>
    <property type="molecule type" value="Genomic_DNA"/>
</dbReference>
<dbReference type="RefSeq" id="WP_002854797.1">
    <property type="nucleotide sequence ID" value="NC_009839.1"/>
</dbReference>
<dbReference type="SMR" id="A8FL05"/>
<dbReference type="KEGG" id="cju:C8J_0543"/>
<dbReference type="HOGENOM" id="CLU_087195_3_0_7"/>
<dbReference type="GO" id="GO:0016462">
    <property type="term" value="F:pyrophosphatase activity"/>
    <property type="evidence" value="ECO:0007669"/>
    <property type="project" value="UniProtKB-ARBA"/>
</dbReference>
<dbReference type="CDD" id="cd03671">
    <property type="entry name" value="NUDIX_Ap4A_hydrolase_plant_like"/>
    <property type="match status" value="1"/>
</dbReference>
<dbReference type="Gene3D" id="3.90.79.10">
    <property type="entry name" value="Nucleoside Triphosphate Pyrophosphohydrolase"/>
    <property type="match status" value="1"/>
</dbReference>
<dbReference type="HAMAP" id="MF_00298">
    <property type="entry name" value="Nudix_RppH"/>
    <property type="match status" value="1"/>
</dbReference>
<dbReference type="InterPro" id="IPR020476">
    <property type="entry name" value="Nudix_hydrolase"/>
</dbReference>
<dbReference type="InterPro" id="IPR015797">
    <property type="entry name" value="NUDIX_hydrolase-like_dom_sf"/>
</dbReference>
<dbReference type="InterPro" id="IPR020084">
    <property type="entry name" value="NUDIX_hydrolase_CS"/>
</dbReference>
<dbReference type="InterPro" id="IPR000086">
    <property type="entry name" value="NUDIX_hydrolase_dom"/>
</dbReference>
<dbReference type="InterPro" id="IPR022927">
    <property type="entry name" value="RppH"/>
</dbReference>
<dbReference type="NCBIfam" id="NF001936">
    <property type="entry name" value="PRK00714.1-3"/>
    <property type="match status" value="1"/>
</dbReference>
<dbReference type="NCBIfam" id="NF001938">
    <property type="entry name" value="PRK00714.1-5"/>
    <property type="match status" value="1"/>
</dbReference>
<dbReference type="PANTHER" id="PTHR43736">
    <property type="entry name" value="ADP-RIBOSE PYROPHOSPHATASE"/>
    <property type="match status" value="1"/>
</dbReference>
<dbReference type="PANTHER" id="PTHR43736:SF1">
    <property type="entry name" value="DIHYDRONEOPTERIN TRIPHOSPHATE DIPHOSPHATASE"/>
    <property type="match status" value="1"/>
</dbReference>
<dbReference type="Pfam" id="PF00293">
    <property type="entry name" value="NUDIX"/>
    <property type="match status" value="1"/>
</dbReference>
<dbReference type="PRINTS" id="PR00502">
    <property type="entry name" value="NUDIXFAMILY"/>
</dbReference>
<dbReference type="SUPFAM" id="SSF55811">
    <property type="entry name" value="Nudix"/>
    <property type="match status" value="1"/>
</dbReference>
<dbReference type="PROSITE" id="PS51462">
    <property type="entry name" value="NUDIX"/>
    <property type="match status" value="1"/>
</dbReference>
<dbReference type="PROSITE" id="PS00893">
    <property type="entry name" value="NUDIX_BOX"/>
    <property type="match status" value="1"/>
</dbReference>
<name>RPPH_CAMJ8</name>
<protein>
    <recommendedName>
        <fullName evidence="1">RNA pyrophosphohydrolase</fullName>
        <ecNumber evidence="1">3.6.1.-</ecNumber>
    </recommendedName>
    <alternativeName>
        <fullName evidence="1">(Di)nucleoside polyphosphate hydrolase</fullName>
    </alternativeName>
</protein>
<feature type="chain" id="PRO_1000078956" description="RNA pyrophosphohydrolase">
    <location>
        <begin position="1"/>
        <end position="156"/>
    </location>
</feature>
<feature type="domain" description="Nudix hydrolase" evidence="1">
    <location>
        <begin position="6"/>
        <end position="148"/>
    </location>
</feature>
<feature type="short sequence motif" description="Nudix box">
    <location>
        <begin position="43"/>
        <end position="64"/>
    </location>
</feature>
<proteinExistence type="inferred from homology"/>
<keyword id="KW-0378">Hydrolase</keyword>
<organism>
    <name type="scientific">Campylobacter jejuni subsp. jejuni serotype O:6 (strain 81116 / NCTC 11828)</name>
    <dbReference type="NCBI Taxonomy" id="407148"/>
    <lineage>
        <taxon>Bacteria</taxon>
        <taxon>Pseudomonadati</taxon>
        <taxon>Campylobacterota</taxon>
        <taxon>Epsilonproteobacteria</taxon>
        <taxon>Campylobacterales</taxon>
        <taxon>Campylobacteraceae</taxon>
        <taxon>Campylobacter</taxon>
    </lineage>
</organism>
<comment type="function">
    <text evidence="1">Accelerates the degradation of transcripts by removing pyrophosphate from the 5'-end of triphosphorylated RNA, leading to a more labile monophosphorylated state that can stimulate subsequent ribonuclease cleavage.</text>
</comment>
<comment type="cofactor">
    <cofactor evidence="1">
        <name>a divalent metal cation</name>
        <dbReference type="ChEBI" id="CHEBI:60240"/>
    </cofactor>
</comment>
<comment type="similarity">
    <text evidence="1">Belongs to the Nudix hydrolase family. RppH subfamily.</text>
</comment>
<reference key="1">
    <citation type="journal article" date="2007" name="J. Bacteriol.">
        <title>The complete genome sequence of Campylobacter jejuni strain 81116 (NCTC11828).</title>
        <authorList>
            <person name="Pearson B.M."/>
            <person name="Gaskin D.J.H."/>
            <person name="Segers R.P.A.M."/>
            <person name="Wells J.M."/>
            <person name="Nuijten P.J.M."/>
            <person name="van Vliet A.H.M."/>
        </authorList>
    </citation>
    <scope>NUCLEOTIDE SEQUENCE [LARGE SCALE GENOMIC DNA]</scope>
    <source>
        <strain>81116 / NCTC 11828</strain>
    </source>
</reference>
<accession>A8FL05</accession>
<evidence type="ECO:0000255" key="1">
    <source>
        <dbReference type="HAMAP-Rule" id="MF_00298"/>
    </source>
</evidence>
<gene>
    <name evidence="1" type="primary">rppH</name>
    <name evidence="1" type="synonym">nudH</name>
    <name type="ordered locus">C8J_0543</name>
</gene>